<proteinExistence type="inferred from homology"/>
<organism>
    <name type="scientific">Moorella thermoacetica (strain ATCC 39073 / JCM 9320)</name>
    <dbReference type="NCBI Taxonomy" id="264732"/>
    <lineage>
        <taxon>Bacteria</taxon>
        <taxon>Bacillati</taxon>
        <taxon>Bacillota</taxon>
        <taxon>Clostridia</taxon>
        <taxon>Moorellales</taxon>
        <taxon>Moorellaceae</taxon>
        <taxon>Moorella</taxon>
    </lineage>
</organism>
<protein>
    <recommendedName>
        <fullName evidence="2">D-alanine--D-alanine ligase</fullName>
        <ecNumber evidence="2">6.3.2.4</ecNumber>
    </recommendedName>
    <alternativeName>
        <fullName evidence="2">D-Ala-D-Ala ligase</fullName>
    </alternativeName>
    <alternativeName>
        <fullName evidence="2">D-alanylalanine synthetase</fullName>
    </alternativeName>
</protein>
<feature type="chain" id="PRO_1000030467" description="D-alanine--D-alanine ligase">
    <location>
        <begin position="1"/>
        <end position="309"/>
    </location>
</feature>
<feature type="domain" description="ATP-grasp" evidence="2">
    <location>
        <begin position="99"/>
        <end position="304"/>
    </location>
</feature>
<feature type="binding site" evidence="2">
    <location>
        <begin position="132"/>
        <end position="187"/>
    </location>
    <ligand>
        <name>ATP</name>
        <dbReference type="ChEBI" id="CHEBI:30616"/>
    </ligand>
</feature>
<feature type="binding site" evidence="2">
    <location>
        <position position="258"/>
    </location>
    <ligand>
        <name>Mg(2+)</name>
        <dbReference type="ChEBI" id="CHEBI:18420"/>
        <label>1</label>
    </ligand>
</feature>
<feature type="binding site" evidence="2">
    <location>
        <position position="271"/>
    </location>
    <ligand>
        <name>Mg(2+)</name>
        <dbReference type="ChEBI" id="CHEBI:18420"/>
        <label>1</label>
    </ligand>
</feature>
<feature type="binding site" evidence="2">
    <location>
        <position position="271"/>
    </location>
    <ligand>
        <name>Mg(2+)</name>
        <dbReference type="ChEBI" id="CHEBI:18420"/>
        <label>2</label>
    </ligand>
</feature>
<feature type="binding site" evidence="2">
    <location>
        <position position="273"/>
    </location>
    <ligand>
        <name>Mg(2+)</name>
        <dbReference type="ChEBI" id="CHEBI:18420"/>
        <label>2</label>
    </ligand>
</feature>
<name>DDL_MOOTA</name>
<sequence>MKIAVLMGGPSSEREISLKSGSAVAAALSGLGHQVITIDLNREVVARLKNFAPDVVFNALHGKPGEDGSVQGLLEVLGLPYTGSRVLASAITMDKIMTKRVLLQAGIPTPKFLAWTGAEYATGKKEIKAAILKELGLPVVIKAPTQGSTIGTFIVREEGELEPAIAGALKYDLSFMAEAYLAGPEITAAVLGNRKPQVLPLIEIVSHTGFYDYQAKYTPGLSDHIIPPRLPDDVLAAATSLAGRTYALLGCRGFARVDFIVAGGREPQVIEVNSVPGMTATSLVPDAARAAGLDFPDLVQKIVDLALEP</sequence>
<gene>
    <name evidence="2" type="primary">ddl</name>
    <name type="ordered locus">Moth_1140</name>
</gene>
<reference key="1">
    <citation type="journal article" date="2008" name="Environ. Microbiol.">
        <title>The complete genome sequence of Moorella thermoacetica (f. Clostridium thermoaceticum).</title>
        <authorList>
            <person name="Pierce E."/>
            <person name="Xie G."/>
            <person name="Barabote R.D."/>
            <person name="Saunders E."/>
            <person name="Han C.S."/>
            <person name="Detter J.C."/>
            <person name="Richardson P."/>
            <person name="Brettin T.S."/>
            <person name="Das A."/>
            <person name="Ljungdahl L.G."/>
            <person name="Ragsdale S.W."/>
        </authorList>
    </citation>
    <scope>NUCLEOTIDE SEQUENCE [LARGE SCALE GENOMIC DNA]</scope>
    <source>
        <strain>ATCC 39073 / JCM 9320</strain>
    </source>
</reference>
<dbReference type="EC" id="6.3.2.4" evidence="2"/>
<dbReference type="EMBL" id="CP000232">
    <property type="protein sequence ID" value="ABC19454.1"/>
    <property type="molecule type" value="Genomic_DNA"/>
</dbReference>
<dbReference type="RefSeq" id="YP_429997.1">
    <property type="nucleotide sequence ID" value="NC_007644.1"/>
</dbReference>
<dbReference type="SMR" id="Q2RJD5"/>
<dbReference type="STRING" id="264732.Moth_1140"/>
<dbReference type="EnsemblBacteria" id="ABC19454">
    <property type="protein sequence ID" value="ABC19454"/>
    <property type="gene ID" value="Moth_1140"/>
</dbReference>
<dbReference type="KEGG" id="mta:Moth_1140"/>
<dbReference type="PATRIC" id="fig|264732.11.peg.1222"/>
<dbReference type="eggNOG" id="COG1181">
    <property type="taxonomic scope" value="Bacteria"/>
</dbReference>
<dbReference type="HOGENOM" id="CLU_039268_2_0_9"/>
<dbReference type="OrthoDB" id="9813261at2"/>
<dbReference type="UniPathway" id="UPA00219"/>
<dbReference type="GO" id="GO:0005737">
    <property type="term" value="C:cytoplasm"/>
    <property type="evidence" value="ECO:0007669"/>
    <property type="project" value="UniProtKB-SubCell"/>
</dbReference>
<dbReference type="GO" id="GO:0005524">
    <property type="term" value="F:ATP binding"/>
    <property type="evidence" value="ECO:0007669"/>
    <property type="project" value="UniProtKB-KW"/>
</dbReference>
<dbReference type="GO" id="GO:0008716">
    <property type="term" value="F:D-alanine-D-alanine ligase activity"/>
    <property type="evidence" value="ECO:0007669"/>
    <property type="project" value="UniProtKB-UniRule"/>
</dbReference>
<dbReference type="GO" id="GO:0046872">
    <property type="term" value="F:metal ion binding"/>
    <property type="evidence" value="ECO:0007669"/>
    <property type="project" value="UniProtKB-KW"/>
</dbReference>
<dbReference type="GO" id="GO:0071555">
    <property type="term" value="P:cell wall organization"/>
    <property type="evidence" value="ECO:0007669"/>
    <property type="project" value="UniProtKB-KW"/>
</dbReference>
<dbReference type="GO" id="GO:0009252">
    <property type="term" value="P:peptidoglycan biosynthetic process"/>
    <property type="evidence" value="ECO:0007669"/>
    <property type="project" value="UniProtKB-UniRule"/>
</dbReference>
<dbReference type="GO" id="GO:0008360">
    <property type="term" value="P:regulation of cell shape"/>
    <property type="evidence" value="ECO:0007669"/>
    <property type="project" value="UniProtKB-KW"/>
</dbReference>
<dbReference type="Gene3D" id="3.40.50.20">
    <property type="match status" value="1"/>
</dbReference>
<dbReference type="Gene3D" id="3.30.1490.20">
    <property type="entry name" value="ATP-grasp fold, A domain"/>
    <property type="match status" value="1"/>
</dbReference>
<dbReference type="Gene3D" id="3.30.470.20">
    <property type="entry name" value="ATP-grasp fold, B domain"/>
    <property type="match status" value="1"/>
</dbReference>
<dbReference type="HAMAP" id="MF_00047">
    <property type="entry name" value="Dala_Dala_lig"/>
    <property type="match status" value="1"/>
</dbReference>
<dbReference type="InterPro" id="IPR011761">
    <property type="entry name" value="ATP-grasp"/>
</dbReference>
<dbReference type="InterPro" id="IPR013815">
    <property type="entry name" value="ATP_grasp_subdomain_1"/>
</dbReference>
<dbReference type="InterPro" id="IPR000291">
    <property type="entry name" value="D-Ala_lig_Van_CS"/>
</dbReference>
<dbReference type="InterPro" id="IPR005905">
    <property type="entry name" value="D_ala_D_ala"/>
</dbReference>
<dbReference type="InterPro" id="IPR011095">
    <property type="entry name" value="Dala_Dala_lig_C"/>
</dbReference>
<dbReference type="InterPro" id="IPR011127">
    <property type="entry name" value="Dala_Dala_lig_N"/>
</dbReference>
<dbReference type="InterPro" id="IPR016185">
    <property type="entry name" value="PreATP-grasp_dom_sf"/>
</dbReference>
<dbReference type="NCBIfam" id="TIGR01205">
    <property type="entry name" value="D_ala_D_alaTIGR"/>
    <property type="match status" value="1"/>
</dbReference>
<dbReference type="NCBIfam" id="NF002378">
    <property type="entry name" value="PRK01372.1"/>
    <property type="match status" value="1"/>
</dbReference>
<dbReference type="PANTHER" id="PTHR23132">
    <property type="entry name" value="D-ALANINE--D-ALANINE LIGASE"/>
    <property type="match status" value="1"/>
</dbReference>
<dbReference type="PANTHER" id="PTHR23132:SF23">
    <property type="entry name" value="D-ALANINE--D-ALANINE LIGASE B"/>
    <property type="match status" value="1"/>
</dbReference>
<dbReference type="Pfam" id="PF07478">
    <property type="entry name" value="Dala_Dala_lig_C"/>
    <property type="match status" value="1"/>
</dbReference>
<dbReference type="Pfam" id="PF01820">
    <property type="entry name" value="Dala_Dala_lig_N"/>
    <property type="match status" value="1"/>
</dbReference>
<dbReference type="PIRSF" id="PIRSF039102">
    <property type="entry name" value="Ddl/VanB"/>
    <property type="match status" value="1"/>
</dbReference>
<dbReference type="SUPFAM" id="SSF56059">
    <property type="entry name" value="Glutathione synthetase ATP-binding domain-like"/>
    <property type="match status" value="1"/>
</dbReference>
<dbReference type="SUPFAM" id="SSF52440">
    <property type="entry name" value="PreATP-grasp domain"/>
    <property type="match status" value="1"/>
</dbReference>
<dbReference type="PROSITE" id="PS50975">
    <property type="entry name" value="ATP_GRASP"/>
    <property type="match status" value="1"/>
</dbReference>
<dbReference type="PROSITE" id="PS00843">
    <property type="entry name" value="DALA_DALA_LIGASE_1"/>
    <property type="match status" value="1"/>
</dbReference>
<dbReference type="PROSITE" id="PS00844">
    <property type="entry name" value="DALA_DALA_LIGASE_2"/>
    <property type="match status" value="1"/>
</dbReference>
<comment type="function">
    <text evidence="2">Cell wall formation.</text>
</comment>
<comment type="catalytic activity">
    <reaction evidence="2">
        <text>2 D-alanine + ATP = D-alanyl-D-alanine + ADP + phosphate + H(+)</text>
        <dbReference type="Rhea" id="RHEA:11224"/>
        <dbReference type="ChEBI" id="CHEBI:15378"/>
        <dbReference type="ChEBI" id="CHEBI:30616"/>
        <dbReference type="ChEBI" id="CHEBI:43474"/>
        <dbReference type="ChEBI" id="CHEBI:57416"/>
        <dbReference type="ChEBI" id="CHEBI:57822"/>
        <dbReference type="ChEBI" id="CHEBI:456216"/>
        <dbReference type="EC" id="6.3.2.4"/>
    </reaction>
</comment>
<comment type="cofactor">
    <cofactor evidence="1">
        <name>Mg(2+)</name>
        <dbReference type="ChEBI" id="CHEBI:18420"/>
    </cofactor>
    <cofactor evidence="1">
        <name>Mn(2+)</name>
        <dbReference type="ChEBI" id="CHEBI:29035"/>
    </cofactor>
    <text evidence="1">Binds 2 magnesium or manganese ions per subunit.</text>
</comment>
<comment type="pathway">
    <text evidence="2">Cell wall biogenesis; peptidoglycan biosynthesis.</text>
</comment>
<comment type="subcellular location">
    <subcellularLocation>
        <location evidence="2">Cytoplasm</location>
    </subcellularLocation>
</comment>
<comment type="similarity">
    <text evidence="2">Belongs to the D-alanine--D-alanine ligase family.</text>
</comment>
<accession>Q2RJD5</accession>
<evidence type="ECO:0000250" key="1"/>
<evidence type="ECO:0000255" key="2">
    <source>
        <dbReference type="HAMAP-Rule" id="MF_00047"/>
    </source>
</evidence>
<keyword id="KW-0067">ATP-binding</keyword>
<keyword id="KW-0133">Cell shape</keyword>
<keyword id="KW-0961">Cell wall biogenesis/degradation</keyword>
<keyword id="KW-0963">Cytoplasm</keyword>
<keyword id="KW-0436">Ligase</keyword>
<keyword id="KW-0460">Magnesium</keyword>
<keyword id="KW-0464">Manganese</keyword>
<keyword id="KW-0479">Metal-binding</keyword>
<keyword id="KW-0547">Nucleotide-binding</keyword>
<keyword id="KW-0573">Peptidoglycan synthesis</keyword>